<reference key="1">
    <citation type="journal article" date="2007" name="PLoS Genet.">
        <title>Patterns and implications of gene gain and loss in the evolution of Prochlorococcus.</title>
        <authorList>
            <person name="Kettler G.C."/>
            <person name="Martiny A.C."/>
            <person name="Huang K."/>
            <person name="Zucker J."/>
            <person name="Coleman M.L."/>
            <person name="Rodrigue S."/>
            <person name="Chen F."/>
            <person name="Lapidus A."/>
            <person name="Ferriera S."/>
            <person name="Johnson J."/>
            <person name="Steglich C."/>
            <person name="Church G.M."/>
            <person name="Richardson P."/>
            <person name="Chisholm S.W."/>
        </authorList>
    </citation>
    <scope>NUCLEOTIDE SEQUENCE [LARGE SCALE GENOMIC DNA]</scope>
    <source>
        <strain>AS9601</strain>
    </source>
</reference>
<name>HEM3_PROMS</name>
<keyword id="KW-0149">Chlorophyll biosynthesis</keyword>
<keyword id="KW-0627">Porphyrin biosynthesis</keyword>
<keyword id="KW-0808">Transferase</keyword>
<organism>
    <name type="scientific">Prochlorococcus marinus (strain AS9601)</name>
    <dbReference type="NCBI Taxonomy" id="146891"/>
    <lineage>
        <taxon>Bacteria</taxon>
        <taxon>Bacillati</taxon>
        <taxon>Cyanobacteriota</taxon>
        <taxon>Cyanophyceae</taxon>
        <taxon>Synechococcales</taxon>
        <taxon>Prochlorococcaceae</taxon>
        <taxon>Prochlorococcus</taxon>
    </lineage>
</organism>
<accession>A2BPX7</accession>
<feature type="chain" id="PRO_0000304258" description="Porphobilinogen deaminase">
    <location>
        <begin position="1"/>
        <end position="316"/>
    </location>
</feature>
<feature type="modified residue" description="S-(dipyrrolylmethanemethyl)cysteine" evidence="1">
    <location>
        <position position="245"/>
    </location>
</feature>
<protein>
    <recommendedName>
        <fullName evidence="1">Porphobilinogen deaminase</fullName>
        <shortName evidence="1">PBG</shortName>
        <ecNumber evidence="1">2.5.1.61</ecNumber>
    </recommendedName>
    <alternativeName>
        <fullName evidence="1">Hydroxymethylbilane synthase</fullName>
        <shortName evidence="1">HMBS</shortName>
    </alternativeName>
    <alternativeName>
        <fullName evidence="1">Pre-uroporphyrinogen synthase</fullName>
    </alternativeName>
</protein>
<proteinExistence type="inferred from homology"/>
<evidence type="ECO:0000255" key="1">
    <source>
        <dbReference type="HAMAP-Rule" id="MF_00260"/>
    </source>
</evidence>
<dbReference type="EC" id="2.5.1.61" evidence="1"/>
<dbReference type="EMBL" id="CP000551">
    <property type="protein sequence ID" value="ABM69838.1"/>
    <property type="molecule type" value="Genomic_DNA"/>
</dbReference>
<dbReference type="RefSeq" id="WP_011818004.1">
    <property type="nucleotide sequence ID" value="NC_008816.1"/>
</dbReference>
<dbReference type="SMR" id="A2BPX7"/>
<dbReference type="STRING" id="146891.A9601_05521"/>
<dbReference type="KEGG" id="pmb:A9601_05521"/>
<dbReference type="eggNOG" id="COG0181">
    <property type="taxonomic scope" value="Bacteria"/>
</dbReference>
<dbReference type="HOGENOM" id="CLU_019704_0_2_3"/>
<dbReference type="OrthoDB" id="9810298at2"/>
<dbReference type="UniPathway" id="UPA00251">
    <property type="reaction ID" value="UER00319"/>
</dbReference>
<dbReference type="UniPathway" id="UPA00668"/>
<dbReference type="Proteomes" id="UP000002590">
    <property type="component" value="Chromosome"/>
</dbReference>
<dbReference type="GO" id="GO:0005737">
    <property type="term" value="C:cytoplasm"/>
    <property type="evidence" value="ECO:0007669"/>
    <property type="project" value="TreeGrafter"/>
</dbReference>
<dbReference type="GO" id="GO:0004418">
    <property type="term" value="F:hydroxymethylbilane synthase activity"/>
    <property type="evidence" value="ECO:0007669"/>
    <property type="project" value="UniProtKB-UniRule"/>
</dbReference>
<dbReference type="GO" id="GO:0015995">
    <property type="term" value="P:chlorophyll biosynthetic process"/>
    <property type="evidence" value="ECO:0007669"/>
    <property type="project" value="UniProtKB-UniRule"/>
</dbReference>
<dbReference type="GO" id="GO:0006782">
    <property type="term" value="P:protoporphyrinogen IX biosynthetic process"/>
    <property type="evidence" value="ECO:0007669"/>
    <property type="project" value="UniProtKB-UniRule"/>
</dbReference>
<dbReference type="CDD" id="cd13645">
    <property type="entry name" value="PBP2_HuPBGD_like"/>
    <property type="match status" value="1"/>
</dbReference>
<dbReference type="FunFam" id="3.30.160.40:FF:000002">
    <property type="entry name" value="Porphobilinogen deaminase"/>
    <property type="match status" value="1"/>
</dbReference>
<dbReference type="FunFam" id="3.40.190.10:FF:000004">
    <property type="entry name" value="Porphobilinogen deaminase"/>
    <property type="match status" value="1"/>
</dbReference>
<dbReference type="FunFam" id="3.40.190.10:FF:000005">
    <property type="entry name" value="Porphobilinogen deaminase"/>
    <property type="match status" value="1"/>
</dbReference>
<dbReference type="Gene3D" id="3.40.190.10">
    <property type="entry name" value="Periplasmic binding protein-like II"/>
    <property type="match status" value="2"/>
</dbReference>
<dbReference type="Gene3D" id="3.30.160.40">
    <property type="entry name" value="Porphobilinogen deaminase, C-terminal domain"/>
    <property type="match status" value="1"/>
</dbReference>
<dbReference type="HAMAP" id="MF_00260">
    <property type="entry name" value="Porphobil_deam"/>
    <property type="match status" value="1"/>
</dbReference>
<dbReference type="InterPro" id="IPR000860">
    <property type="entry name" value="HemC"/>
</dbReference>
<dbReference type="InterPro" id="IPR022419">
    <property type="entry name" value="Porphobilin_deaminase_cofac_BS"/>
</dbReference>
<dbReference type="InterPro" id="IPR022417">
    <property type="entry name" value="Porphobilin_deaminase_N"/>
</dbReference>
<dbReference type="InterPro" id="IPR022418">
    <property type="entry name" value="Porphobilinogen_deaminase_C"/>
</dbReference>
<dbReference type="InterPro" id="IPR036803">
    <property type="entry name" value="Porphobilinogen_deaminase_C_sf"/>
</dbReference>
<dbReference type="NCBIfam" id="TIGR00212">
    <property type="entry name" value="hemC"/>
    <property type="match status" value="1"/>
</dbReference>
<dbReference type="PANTHER" id="PTHR11557">
    <property type="entry name" value="PORPHOBILINOGEN DEAMINASE"/>
    <property type="match status" value="1"/>
</dbReference>
<dbReference type="PANTHER" id="PTHR11557:SF0">
    <property type="entry name" value="PORPHOBILINOGEN DEAMINASE"/>
    <property type="match status" value="1"/>
</dbReference>
<dbReference type="Pfam" id="PF01379">
    <property type="entry name" value="Porphobil_deam"/>
    <property type="match status" value="1"/>
</dbReference>
<dbReference type="Pfam" id="PF03900">
    <property type="entry name" value="Porphobil_deamC"/>
    <property type="match status" value="1"/>
</dbReference>
<dbReference type="PIRSF" id="PIRSF001438">
    <property type="entry name" value="4pyrrol_synth_OHMeBilane_synth"/>
    <property type="match status" value="1"/>
</dbReference>
<dbReference type="PRINTS" id="PR00151">
    <property type="entry name" value="PORPHBDMNASE"/>
</dbReference>
<dbReference type="SUPFAM" id="SSF53850">
    <property type="entry name" value="Periplasmic binding protein-like II"/>
    <property type="match status" value="1"/>
</dbReference>
<dbReference type="SUPFAM" id="SSF54782">
    <property type="entry name" value="Porphobilinogen deaminase (hydroxymethylbilane synthase), C-terminal domain"/>
    <property type="match status" value="1"/>
</dbReference>
<dbReference type="PROSITE" id="PS00533">
    <property type="entry name" value="PORPHOBILINOGEN_DEAM"/>
    <property type="match status" value="1"/>
</dbReference>
<gene>
    <name evidence="1" type="primary">hemC</name>
    <name type="ordered locus">A9601_05521</name>
</gene>
<sequence length="316" mass="35034">MTNFKLKIASRRSKLAMVQTLWVKDQLEKNIPNLEVSIEAMATQGDKILDVALAKIGDKGLFTKELEAQMLVGHADIAVHSLKDLPTNLPNGLKLGCITKREDPADALVVNKKNDCYKLENLPEGSIVGTSSLRRLAQLRNKYPHLVFKDIRGNVITRIEKLDAGEFDCIILAAAGLKRLGFESRIHQIIPSEVSLHAVGQGALGIECKSDDKKVLEIISILEDKPTCQRCLAERAFLRELEGGCQVPIGVNSKIQNEQLCLTGMVASLDGERLIKDQYIGDINDPEEVGKELAKKLKQQGAEEILSEIFKKFREK</sequence>
<comment type="function">
    <text evidence="1">Tetrapolymerization of the monopyrrole PBG into the hydroxymethylbilane pre-uroporphyrinogen in several discrete steps.</text>
</comment>
<comment type="catalytic activity">
    <reaction evidence="1">
        <text>4 porphobilinogen + H2O = hydroxymethylbilane + 4 NH4(+)</text>
        <dbReference type="Rhea" id="RHEA:13185"/>
        <dbReference type="ChEBI" id="CHEBI:15377"/>
        <dbReference type="ChEBI" id="CHEBI:28938"/>
        <dbReference type="ChEBI" id="CHEBI:57845"/>
        <dbReference type="ChEBI" id="CHEBI:58126"/>
        <dbReference type="EC" id="2.5.1.61"/>
    </reaction>
</comment>
<comment type="cofactor">
    <cofactor evidence="1">
        <name>dipyrromethane</name>
        <dbReference type="ChEBI" id="CHEBI:60342"/>
    </cofactor>
    <text evidence="1">Binds 1 dipyrromethane group covalently.</text>
</comment>
<comment type="pathway">
    <text evidence="1">Porphyrin-containing compound metabolism; protoporphyrin-IX biosynthesis; coproporphyrinogen-III from 5-aminolevulinate: step 2/4.</text>
</comment>
<comment type="pathway">
    <text evidence="1">Porphyrin-containing compound metabolism; chlorophyll biosynthesis.</text>
</comment>
<comment type="subunit">
    <text evidence="1">Monomer.</text>
</comment>
<comment type="miscellaneous">
    <text evidence="1">The porphobilinogen subunits are added to the dipyrromethane group.</text>
</comment>
<comment type="similarity">
    <text evidence="1">Belongs to the HMBS family.</text>
</comment>